<keyword id="KW-0067">ATP-binding</keyword>
<keyword id="KW-0460">Magnesium</keyword>
<keyword id="KW-0547">Nucleotide-binding</keyword>
<keyword id="KW-1185">Reference proteome</keyword>
<keyword id="KW-0808">Transferase</keyword>
<keyword id="KW-0819">tRNA processing</keyword>
<feature type="chain" id="PRO_0000377314" description="tRNA dimethylallyltransferase">
    <location>
        <begin position="1"/>
        <end position="296"/>
    </location>
</feature>
<feature type="region of interest" description="Interaction with substrate tRNA" evidence="1">
    <location>
        <begin position="27"/>
        <end position="30"/>
    </location>
</feature>
<feature type="region of interest" description="Interaction with substrate tRNA" evidence="1">
    <location>
        <begin position="151"/>
        <end position="155"/>
    </location>
</feature>
<feature type="region of interest" description="Interaction with substrate tRNA" evidence="1">
    <location>
        <begin position="232"/>
        <end position="237"/>
    </location>
</feature>
<feature type="binding site" evidence="1">
    <location>
        <begin position="2"/>
        <end position="9"/>
    </location>
    <ligand>
        <name>ATP</name>
        <dbReference type="ChEBI" id="CHEBI:30616"/>
    </ligand>
</feature>
<feature type="binding site" evidence="1">
    <location>
        <begin position="4"/>
        <end position="9"/>
    </location>
    <ligand>
        <name>substrate</name>
    </ligand>
</feature>
<feature type="site" description="Interaction with substrate tRNA" evidence="1">
    <location>
        <position position="93"/>
    </location>
</feature>
<feature type="site" description="Interaction with substrate tRNA" evidence="1">
    <location>
        <position position="115"/>
    </location>
</feature>
<evidence type="ECO:0000255" key="1">
    <source>
        <dbReference type="HAMAP-Rule" id="MF_00185"/>
    </source>
</evidence>
<reference key="1">
    <citation type="submission" date="2007-10" db="EMBL/GenBank/DDBJ databases">
        <title>Complete sequence of Shewanella pealeana ATCC 700345.</title>
        <authorList>
            <consortium name="US DOE Joint Genome Institute"/>
            <person name="Copeland A."/>
            <person name="Lucas S."/>
            <person name="Lapidus A."/>
            <person name="Barry K."/>
            <person name="Glavina del Rio T."/>
            <person name="Dalin E."/>
            <person name="Tice H."/>
            <person name="Pitluck S."/>
            <person name="Chertkov O."/>
            <person name="Brettin T."/>
            <person name="Bruce D."/>
            <person name="Detter J.C."/>
            <person name="Han C."/>
            <person name="Schmutz J."/>
            <person name="Larimer F."/>
            <person name="Land M."/>
            <person name="Hauser L."/>
            <person name="Kyrpides N."/>
            <person name="Kim E."/>
            <person name="Zhao J.-S.Z."/>
            <person name="Manno D."/>
            <person name="Hawari J."/>
            <person name="Richardson P."/>
        </authorList>
    </citation>
    <scope>NUCLEOTIDE SEQUENCE [LARGE SCALE GENOMIC DNA]</scope>
    <source>
        <strain>ATCC 700345 / ANG-SQ1</strain>
    </source>
</reference>
<gene>
    <name evidence="1" type="primary">miaA</name>
    <name type="ordered locus">Spea_3541</name>
</gene>
<organism>
    <name type="scientific">Shewanella pealeana (strain ATCC 700345 / ANG-SQ1)</name>
    <dbReference type="NCBI Taxonomy" id="398579"/>
    <lineage>
        <taxon>Bacteria</taxon>
        <taxon>Pseudomonadati</taxon>
        <taxon>Pseudomonadota</taxon>
        <taxon>Gammaproteobacteria</taxon>
        <taxon>Alteromonadales</taxon>
        <taxon>Shewanellaceae</taxon>
        <taxon>Shewanella</taxon>
    </lineage>
</organism>
<name>MIAA_SHEPA</name>
<dbReference type="EC" id="2.5.1.75" evidence="1"/>
<dbReference type="EMBL" id="CP000851">
    <property type="protein sequence ID" value="ABV88854.1"/>
    <property type="molecule type" value="Genomic_DNA"/>
</dbReference>
<dbReference type="SMR" id="A8H8G7"/>
<dbReference type="STRING" id="398579.Spea_3541"/>
<dbReference type="KEGG" id="spl:Spea_3541"/>
<dbReference type="eggNOG" id="COG0324">
    <property type="taxonomic scope" value="Bacteria"/>
</dbReference>
<dbReference type="HOGENOM" id="CLU_032616_0_0_6"/>
<dbReference type="Proteomes" id="UP000002608">
    <property type="component" value="Chromosome"/>
</dbReference>
<dbReference type="GO" id="GO:0005524">
    <property type="term" value="F:ATP binding"/>
    <property type="evidence" value="ECO:0007669"/>
    <property type="project" value="UniProtKB-UniRule"/>
</dbReference>
<dbReference type="GO" id="GO:0052381">
    <property type="term" value="F:tRNA dimethylallyltransferase activity"/>
    <property type="evidence" value="ECO:0007669"/>
    <property type="project" value="UniProtKB-UniRule"/>
</dbReference>
<dbReference type="GO" id="GO:0006400">
    <property type="term" value="P:tRNA modification"/>
    <property type="evidence" value="ECO:0007669"/>
    <property type="project" value="TreeGrafter"/>
</dbReference>
<dbReference type="FunFam" id="1.10.20.140:FF:000001">
    <property type="entry name" value="tRNA dimethylallyltransferase"/>
    <property type="match status" value="1"/>
</dbReference>
<dbReference type="Gene3D" id="1.10.20.140">
    <property type="match status" value="1"/>
</dbReference>
<dbReference type="Gene3D" id="3.40.50.300">
    <property type="entry name" value="P-loop containing nucleotide triphosphate hydrolases"/>
    <property type="match status" value="1"/>
</dbReference>
<dbReference type="HAMAP" id="MF_00185">
    <property type="entry name" value="IPP_trans"/>
    <property type="match status" value="1"/>
</dbReference>
<dbReference type="InterPro" id="IPR039657">
    <property type="entry name" value="Dimethylallyltransferase"/>
</dbReference>
<dbReference type="InterPro" id="IPR018022">
    <property type="entry name" value="IPT"/>
</dbReference>
<dbReference type="InterPro" id="IPR027417">
    <property type="entry name" value="P-loop_NTPase"/>
</dbReference>
<dbReference type="NCBIfam" id="TIGR00174">
    <property type="entry name" value="miaA"/>
    <property type="match status" value="1"/>
</dbReference>
<dbReference type="PANTHER" id="PTHR11088">
    <property type="entry name" value="TRNA DIMETHYLALLYLTRANSFERASE"/>
    <property type="match status" value="1"/>
</dbReference>
<dbReference type="PANTHER" id="PTHR11088:SF60">
    <property type="entry name" value="TRNA DIMETHYLALLYLTRANSFERASE"/>
    <property type="match status" value="1"/>
</dbReference>
<dbReference type="Pfam" id="PF01715">
    <property type="entry name" value="IPPT"/>
    <property type="match status" value="1"/>
</dbReference>
<dbReference type="SUPFAM" id="SSF52540">
    <property type="entry name" value="P-loop containing nucleoside triphosphate hydrolases"/>
    <property type="match status" value="1"/>
</dbReference>
<protein>
    <recommendedName>
        <fullName evidence="1">tRNA dimethylallyltransferase</fullName>
        <ecNumber evidence="1">2.5.1.75</ecNumber>
    </recommendedName>
    <alternativeName>
        <fullName evidence="1">Dimethylallyl diphosphate:tRNA dimethylallyltransferase</fullName>
        <shortName evidence="1">DMAPP:tRNA dimethylallyltransferase</shortName>
        <shortName evidence="1">DMATase</shortName>
    </alternativeName>
    <alternativeName>
        <fullName evidence="1">Isopentenyl-diphosphate:tRNA isopentenyltransferase</fullName>
        <shortName evidence="1">IPP transferase</shortName>
        <shortName evidence="1">IPPT</shortName>
        <shortName evidence="1">IPTase</shortName>
    </alternativeName>
</protein>
<sequence length="296" mass="33098">MGPTASGKTALAIELVKQYDCEIISVDSALIYKDMDIGTAKPDAAEQAAAPHRLIDIIDPAQSYSAADFRRDALAQIEDILSRGKTPLLVGGTMMYFKALLEGLSPLPGADEAIREQIAAEAEAQGWQALHDQLREIDPVSAERIHPNDPQRLARALEVYRVSGQTLTELTKTKSDVFPYDVVQFAIAPSDRKVLHRAIETRFKAMLAQGFTSEVERLKARTDLNLDLPSMRCVGYRQCWQYLDGEIDYDTMVEKAIVATRQLAKRQLTWLRGWPDLIWLESGAENNLATVMRHSR</sequence>
<proteinExistence type="inferred from homology"/>
<comment type="function">
    <text evidence="1">Catalyzes the transfer of a dimethylallyl group onto the adenine at position 37 in tRNAs that read codons beginning with uridine, leading to the formation of N6-(dimethylallyl)adenosine (i(6)A).</text>
</comment>
<comment type="catalytic activity">
    <reaction evidence="1">
        <text>adenosine(37) in tRNA + dimethylallyl diphosphate = N(6)-dimethylallyladenosine(37) in tRNA + diphosphate</text>
        <dbReference type="Rhea" id="RHEA:26482"/>
        <dbReference type="Rhea" id="RHEA-COMP:10162"/>
        <dbReference type="Rhea" id="RHEA-COMP:10375"/>
        <dbReference type="ChEBI" id="CHEBI:33019"/>
        <dbReference type="ChEBI" id="CHEBI:57623"/>
        <dbReference type="ChEBI" id="CHEBI:74411"/>
        <dbReference type="ChEBI" id="CHEBI:74415"/>
        <dbReference type="EC" id="2.5.1.75"/>
    </reaction>
</comment>
<comment type="cofactor">
    <cofactor evidence="1">
        <name>Mg(2+)</name>
        <dbReference type="ChEBI" id="CHEBI:18420"/>
    </cofactor>
</comment>
<comment type="subunit">
    <text evidence="1">Monomer.</text>
</comment>
<comment type="similarity">
    <text evidence="1">Belongs to the IPP transferase family.</text>
</comment>
<accession>A8H8G7</accession>